<dbReference type="EC" id="1.3.5.2" evidence="1"/>
<dbReference type="EMBL" id="BA000040">
    <property type="protein sequence ID" value="BAC46405.1"/>
    <property type="molecule type" value="Genomic_DNA"/>
</dbReference>
<dbReference type="RefSeq" id="NP_767780.1">
    <property type="nucleotide sequence ID" value="NC_004463.1"/>
</dbReference>
<dbReference type="RefSeq" id="WP_011083959.1">
    <property type="nucleotide sequence ID" value="NC_004463.1"/>
</dbReference>
<dbReference type="SMR" id="Q89VA7"/>
<dbReference type="FunCoup" id="Q89VA7">
    <property type="interactions" value="635"/>
</dbReference>
<dbReference type="STRING" id="224911.AAV28_02580"/>
<dbReference type="EnsemblBacteria" id="BAC46405">
    <property type="protein sequence ID" value="BAC46405"/>
    <property type="gene ID" value="BAC46405"/>
</dbReference>
<dbReference type="GeneID" id="46488415"/>
<dbReference type="KEGG" id="bja:blr1140"/>
<dbReference type="PATRIC" id="fig|224911.44.peg.542"/>
<dbReference type="eggNOG" id="COG0167">
    <property type="taxonomic scope" value="Bacteria"/>
</dbReference>
<dbReference type="HOGENOM" id="CLU_013640_2_1_5"/>
<dbReference type="InParanoid" id="Q89VA7"/>
<dbReference type="OrthoDB" id="9802377at2"/>
<dbReference type="PhylomeDB" id="Q89VA7"/>
<dbReference type="UniPathway" id="UPA00070">
    <property type="reaction ID" value="UER00946"/>
</dbReference>
<dbReference type="Proteomes" id="UP000002526">
    <property type="component" value="Chromosome"/>
</dbReference>
<dbReference type="GO" id="GO:0005737">
    <property type="term" value="C:cytoplasm"/>
    <property type="evidence" value="ECO:0007669"/>
    <property type="project" value="InterPro"/>
</dbReference>
<dbReference type="GO" id="GO:0005886">
    <property type="term" value="C:plasma membrane"/>
    <property type="evidence" value="ECO:0007669"/>
    <property type="project" value="UniProtKB-SubCell"/>
</dbReference>
<dbReference type="GO" id="GO:0106430">
    <property type="term" value="F:dihydroorotate dehydrogenase (quinone) activity"/>
    <property type="evidence" value="ECO:0007669"/>
    <property type="project" value="UniProtKB-EC"/>
</dbReference>
<dbReference type="GO" id="GO:0004152">
    <property type="term" value="F:dihydroorotate dehydrogenase activity"/>
    <property type="evidence" value="ECO:0000318"/>
    <property type="project" value="GO_Central"/>
</dbReference>
<dbReference type="GO" id="GO:0006207">
    <property type="term" value="P:'de novo' pyrimidine nucleobase biosynthetic process"/>
    <property type="evidence" value="ECO:0000318"/>
    <property type="project" value="GO_Central"/>
</dbReference>
<dbReference type="GO" id="GO:0044205">
    <property type="term" value="P:'de novo' UMP biosynthetic process"/>
    <property type="evidence" value="ECO:0007669"/>
    <property type="project" value="UniProtKB-UniRule"/>
</dbReference>
<dbReference type="GO" id="GO:0009220">
    <property type="term" value="P:pyrimidine ribonucleotide biosynthetic process"/>
    <property type="evidence" value="ECO:0000318"/>
    <property type="project" value="GO_Central"/>
</dbReference>
<dbReference type="CDD" id="cd04738">
    <property type="entry name" value="DHOD_2_like"/>
    <property type="match status" value="1"/>
</dbReference>
<dbReference type="Gene3D" id="3.20.20.70">
    <property type="entry name" value="Aldolase class I"/>
    <property type="match status" value="1"/>
</dbReference>
<dbReference type="HAMAP" id="MF_00225">
    <property type="entry name" value="DHO_dh_type2"/>
    <property type="match status" value="1"/>
</dbReference>
<dbReference type="InterPro" id="IPR013785">
    <property type="entry name" value="Aldolase_TIM"/>
</dbReference>
<dbReference type="InterPro" id="IPR050074">
    <property type="entry name" value="DHO_dehydrogenase"/>
</dbReference>
<dbReference type="InterPro" id="IPR005719">
    <property type="entry name" value="Dihydroorotate_DH_2"/>
</dbReference>
<dbReference type="InterPro" id="IPR005720">
    <property type="entry name" value="Dihydroorotate_DH_cat"/>
</dbReference>
<dbReference type="InterPro" id="IPR001295">
    <property type="entry name" value="Dihydroorotate_DH_CS"/>
</dbReference>
<dbReference type="NCBIfam" id="NF003645">
    <property type="entry name" value="PRK05286.1-2"/>
    <property type="match status" value="1"/>
</dbReference>
<dbReference type="NCBIfam" id="NF003652">
    <property type="entry name" value="PRK05286.2-5"/>
    <property type="match status" value="1"/>
</dbReference>
<dbReference type="NCBIfam" id="TIGR01036">
    <property type="entry name" value="pyrD_sub2"/>
    <property type="match status" value="1"/>
</dbReference>
<dbReference type="PANTHER" id="PTHR48109:SF4">
    <property type="entry name" value="DIHYDROOROTATE DEHYDROGENASE (QUINONE), MITOCHONDRIAL"/>
    <property type="match status" value="1"/>
</dbReference>
<dbReference type="PANTHER" id="PTHR48109">
    <property type="entry name" value="DIHYDROOROTATE DEHYDROGENASE (QUINONE), MITOCHONDRIAL-RELATED"/>
    <property type="match status" value="1"/>
</dbReference>
<dbReference type="Pfam" id="PF01180">
    <property type="entry name" value="DHO_dh"/>
    <property type="match status" value="1"/>
</dbReference>
<dbReference type="SUPFAM" id="SSF51395">
    <property type="entry name" value="FMN-linked oxidoreductases"/>
    <property type="match status" value="1"/>
</dbReference>
<dbReference type="PROSITE" id="PS00911">
    <property type="entry name" value="DHODEHASE_1"/>
    <property type="match status" value="1"/>
</dbReference>
<dbReference type="PROSITE" id="PS00912">
    <property type="entry name" value="DHODEHASE_2"/>
    <property type="match status" value="1"/>
</dbReference>
<evidence type="ECO:0000255" key="1">
    <source>
        <dbReference type="HAMAP-Rule" id="MF_00225"/>
    </source>
</evidence>
<sequence length="365" mass="39336">MIRAFDALSLPVLRWLDPEDAHRLAIQGLRFLPPVKPRADDPKLAVRAFGLNFPNPIGMAAGFDKSAEVPDALLRLGFGFVEIGSVTPKPQSGNPRPRLFRLERDEAVINRMGFNNDGADVALRRLAARAQHGGIVGVNVGANKDSPDRVGDYVKLIEAFAPVASYFTINVSSPNTPGLRNLQEGALLDDLLARVIDARERVRQKAGDTPVLLKIAPDLSLAQLDDVVQVARSRRVDGMIVSNTTIARPSTLREEMRAKEQGGLSGRPLFRLSTRMVAETYVRVEGAFPLVGVGGVDSGGAALTKIRAGASLIQLYSSLVYKGLGLVEEIKRDLTSTLLRTGRDSLSDIVGADAATLTAEDWPGM</sequence>
<keyword id="KW-1003">Cell membrane</keyword>
<keyword id="KW-0285">Flavoprotein</keyword>
<keyword id="KW-0288">FMN</keyword>
<keyword id="KW-0472">Membrane</keyword>
<keyword id="KW-0560">Oxidoreductase</keyword>
<keyword id="KW-0665">Pyrimidine biosynthesis</keyword>
<keyword id="KW-1185">Reference proteome</keyword>
<feature type="chain" id="PRO_1000024155" description="Dihydroorotate dehydrogenase (quinone)">
    <location>
        <begin position="1"/>
        <end position="365"/>
    </location>
</feature>
<feature type="active site" description="Nucleophile" evidence="1">
    <location>
        <position position="173"/>
    </location>
</feature>
<feature type="binding site" evidence="1">
    <location>
        <begin position="61"/>
        <end position="65"/>
    </location>
    <ligand>
        <name>FMN</name>
        <dbReference type="ChEBI" id="CHEBI:58210"/>
    </ligand>
</feature>
<feature type="binding site" evidence="1">
    <location>
        <position position="65"/>
    </location>
    <ligand>
        <name>substrate</name>
    </ligand>
</feature>
<feature type="binding site" evidence="1">
    <location>
        <position position="85"/>
    </location>
    <ligand>
        <name>FMN</name>
        <dbReference type="ChEBI" id="CHEBI:58210"/>
    </ligand>
</feature>
<feature type="binding site" evidence="1">
    <location>
        <begin position="110"/>
        <end position="114"/>
    </location>
    <ligand>
        <name>substrate</name>
    </ligand>
</feature>
<feature type="binding site" evidence="1">
    <location>
        <position position="139"/>
    </location>
    <ligand>
        <name>FMN</name>
        <dbReference type="ChEBI" id="CHEBI:58210"/>
    </ligand>
</feature>
<feature type="binding site" evidence="1">
    <location>
        <position position="170"/>
    </location>
    <ligand>
        <name>FMN</name>
        <dbReference type="ChEBI" id="CHEBI:58210"/>
    </ligand>
</feature>
<feature type="binding site" evidence="1">
    <location>
        <position position="170"/>
    </location>
    <ligand>
        <name>substrate</name>
    </ligand>
</feature>
<feature type="binding site" evidence="1">
    <location>
        <position position="175"/>
    </location>
    <ligand>
        <name>substrate</name>
    </ligand>
</feature>
<feature type="binding site" evidence="1">
    <location>
        <position position="214"/>
    </location>
    <ligand>
        <name>FMN</name>
        <dbReference type="ChEBI" id="CHEBI:58210"/>
    </ligand>
</feature>
<feature type="binding site" evidence="1">
    <location>
        <position position="242"/>
    </location>
    <ligand>
        <name>FMN</name>
        <dbReference type="ChEBI" id="CHEBI:58210"/>
    </ligand>
</feature>
<feature type="binding site" evidence="1">
    <location>
        <begin position="243"/>
        <end position="244"/>
    </location>
    <ligand>
        <name>substrate</name>
    </ligand>
</feature>
<feature type="binding site" evidence="1">
    <location>
        <position position="266"/>
    </location>
    <ligand>
        <name>FMN</name>
        <dbReference type="ChEBI" id="CHEBI:58210"/>
    </ligand>
</feature>
<feature type="binding site" evidence="1">
    <location>
        <position position="295"/>
    </location>
    <ligand>
        <name>FMN</name>
        <dbReference type="ChEBI" id="CHEBI:58210"/>
    </ligand>
</feature>
<feature type="binding site" evidence="1">
    <location>
        <begin position="316"/>
        <end position="317"/>
    </location>
    <ligand>
        <name>FMN</name>
        <dbReference type="ChEBI" id="CHEBI:58210"/>
    </ligand>
</feature>
<comment type="function">
    <text evidence="1">Catalyzes the conversion of dihydroorotate to orotate with quinone as electron acceptor.</text>
</comment>
<comment type="catalytic activity">
    <reaction evidence="1">
        <text>(S)-dihydroorotate + a quinone = orotate + a quinol</text>
        <dbReference type="Rhea" id="RHEA:30187"/>
        <dbReference type="ChEBI" id="CHEBI:24646"/>
        <dbReference type="ChEBI" id="CHEBI:30839"/>
        <dbReference type="ChEBI" id="CHEBI:30864"/>
        <dbReference type="ChEBI" id="CHEBI:132124"/>
        <dbReference type="EC" id="1.3.5.2"/>
    </reaction>
</comment>
<comment type="cofactor">
    <cofactor evidence="1">
        <name>FMN</name>
        <dbReference type="ChEBI" id="CHEBI:58210"/>
    </cofactor>
    <text evidence="1">Binds 1 FMN per subunit.</text>
</comment>
<comment type="pathway">
    <text evidence="1">Pyrimidine metabolism; UMP biosynthesis via de novo pathway; orotate from (S)-dihydroorotate (quinone route): step 1/1.</text>
</comment>
<comment type="subunit">
    <text evidence="1">Monomer.</text>
</comment>
<comment type="subcellular location">
    <subcellularLocation>
        <location evidence="1">Cell membrane</location>
        <topology evidence="1">Peripheral membrane protein</topology>
    </subcellularLocation>
</comment>
<comment type="similarity">
    <text evidence="1">Belongs to the dihydroorotate dehydrogenase family. Type 2 subfamily.</text>
</comment>
<gene>
    <name evidence="1" type="primary">pyrD</name>
    <name type="ordered locus">blr1140</name>
</gene>
<proteinExistence type="inferred from homology"/>
<organism>
    <name type="scientific">Bradyrhizobium diazoefficiens (strain JCM 10833 / BCRC 13528 / IAM 13628 / NBRC 14792 / USDA 110)</name>
    <dbReference type="NCBI Taxonomy" id="224911"/>
    <lineage>
        <taxon>Bacteria</taxon>
        <taxon>Pseudomonadati</taxon>
        <taxon>Pseudomonadota</taxon>
        <taxon>Alphaproteobacteria</taxon>
        <taxon>Hyphomicrobiales</taxon>
        <taxon>Nitrobacteraceae</taxon>
        <taxon>Bradyrhizobium</taxon>
    </lineage>
</organism>
<protein>
    <recommendedName>
        <fullName evidence="1">Dihydroorotate dehydrogenase (quinone)</fullName>
        <ecNumber evidence="1">1.3.5.2</ecNumber>
    </recommendedName>
    <alternativeName>
        <fullName evidence="1">DHOdehase</fullName>
        <shortName evidence="1">DHOD</shortName>
        <shortName evidence="1">DHODase</shortName>
    </alternativeName>
    <alternativeName>
        <fullName evidence="1">Dihydroorotate oxidase</fullName>
    </alternativeName>
</protein>
<name>PYRD_BRADU</name>
<accession>Q89VA7</accession>
<reference key="1">
    <citation type="journal article" date="2002" name="DNA Res.">
        <title>Complete genomic sequence of nitrogen-fixing symbiotic bacterium Bradyrhizobium japonicum USDA110.</title>
        <authorList>
            <person name="Kaneko T."/>
            <person name="Nakamura Y."/>
            <person name="Sato S."/>
            <person name="Minamisawa K."/>
            <person name="Uchiumi T."/>
            <person name="Sasamoto S."/>
            <person name="Watanabe A."/>
            <person name="Idesawa K."/>
            <person name="Iriguchi M."/>
            <person name="Kawashima K."/>
            <person name="Kohara M."/>
            <person name="Matsumoto M."/>
            <person name="Shimpo S."/>
            <person name="Tsuruoka H."/>
            <person name="Wada T."/>
            <person name="Yamada M."/>
            <person name="Tabata S."/>
        </authorList>
    </citation>
    <scope>NUCLEOTIDE SEQUENCE [LARGE SCALE GENOMIC DNA]</scope>
    <source>
        <strain>JCM 10833 / BCRC 13528 / IAM 13628 / NBRC 14792 / USDA 110</strain>
    </source>
</reference>